<dbReference type="EC" id="2.7.4.10" evidence="3 4 5"/>
<dbReference type="EMBL" id="AB021870">
    <property type="protein sequence ID" value="BAA87913.1"/>
    <property type="molecule type" value="mRNA"/>
</dbReference>
<dbReference type="EMBL" id="AF183419">
    <property type="protein sequence ID" value="AAG09688.1"/>
    <property type="molecule type" value="mRNA"/>
</dbReference>
<dbReference type="EMBL" id="AK001553">
    <property type="protein sequence ID" value="BAA91753.1"/>
    <property type="molecule type" value="mRNA"/>
</dbReference>
<dbReference type="EMBL" id="AK001951">
    <property type="protein sequence ID" value="BAA91996.1"/>
    <property type="molecule type" value="mRNA"/>
</dbReference>
<dbReference type="EMBL" id="AK027534">
    <property type="protein sequence ID" value="BAB55183.1"/>
    <property type="molecule type" value="mRNA"/>
</dbReference>
<dbReference type="EMBL" id="AK098205">
    <property type="protein sequence ID" value="BAG53592.1"/>
    <property type="molecule type" value="mRNA"/>
</dbReference>
<dbReference type="EMBL" id="AK298200">
    <property type="protein sequence ID" value="BAG60470.1"/>
    <property type="molecule type" value="mRNA"/>
</dbReference>
<dbReference type="EMBL" id="AL136231">
    <property type="status" value="NOT_ANNOTATED_CDS"/>
    <property type="molecule type" value="Genomic_DNA"/>
</dbReference>
<dbReference type="EMBL" id="AL353151">
    <property type="status" value="NOT_ANNOTATED_CDS"/>
    <property type="molecule type" value="Genomic_DNA"/>
</dbReference>
<dbReference type="EMBL" id="CH471071">
    <property type="protein sequence ID" value="EAW58779.1"/>
    <property type="molecule type" value="Genomic_DNA"/>
</dbReference>
<dbReference type="EMBL" id="CH471071">
    <property type="protein sequence ID" value="EAW58780.1"/>
    <property type="molecule type" value="Genomic_DNA"/>
</dbReference>
<dbReference type="EMBL" id="CH471071">
    <property type="protein sequence ID" value="EAW58781.1"/>
    <property type="molecule type" value="Genomic_DNA"/>
</dbReference>
<dbReference type="EMBL" id="BC013771">
    <property type="protein sequence ID" value="AAH13771.1"/>
    <property type="molecule type" value="mRNA"/>
</dbReference>
<dbReference type="CCDS" id="CCDS56561.1">
    <molecule id="Q9UIJ7-2"/>
</dbReference>
<dbReference type="CCDS" id="CCDS56562.1">
    <molecule id="Q9UIJ7-3"/>
</dbReference>
<dbReference type="CCDS" id="CCDS6455.1">
    <molecule id="Q9UIJ7-1"/>
</dbReference>
<dbReference type="RefSeq" id="NP_001186781.1">
    <molecule id="Q9UIJ7-3"/>
    <property type="nucleotide sequence ID" value="NM_001199852.2"/>
</dbReference>
<dbReference type="RefSeq" id="NP_001186782.1">
    <molecule id="Q9UIJ7-2"/>
    <property type="nucleotide sequence ID" value="NM_001199853.2"/>
</dbReference>
<dbReference type="RefSeq" id="NP_001186784.1">
    <molecule id="Q9UIJ7-2"/>
    <property type="nucleotide sequence ID" value="NM_001199855.2"/>
</dbReference>
<dbReference type="RefSeq" id="NP_001186785.1">
    <molecule id="Q9UIJ7-2"/>
    <property type="nucleotide sequence ID" value="NM_001199856.2"/>
</dbReference>
<dbReference type="RefSeq" id="NP_057366.2">
    <molecule id="Q9UIJ7-1"/>
    <property type="nucleotide sequence ID" value="NM_016282.3"/>
</dbReference>
<dbReference type="PDB" id="1ZD8">
    <property type="method" value="X-ray"/>
    <property type="resolution" value="1.48 A"/>
    <property type="chains" value="A=1-227"/>
</dbReference>
<dbReference type="PDB" id="6ZJB">
    <property type="method" value="X-ray"/>
    <property type="resolution" value="1.82 A"/>
    <property type="chains" value="A/B/C/D/E/F=1-227"/>
</dbReference>
<dbReference type="PDB" id="6ZJD">
    <property type="method" value="X-ray"/>
    <property type="resolution" value="1.75 A"/>
    <property type="chains" value="A=1-227"/>
</dbReference>
<dbReference type="PDB" id="6ZJE">
    <property type="method" value="X-ray"/>
    <property type="resolution" value="1.48 A"/>
    <property type="chains" value="A=1-227"/>
</dbReference>
<dbReference type="PDBsum" id="1ZD8"/>
<dbReference type="PDBsum" id="6ZJB"/>
<dbReference type="PDBsum" id="6ZJD"/>
<dbReference type="PDBsum" id="6ZJE"/>
<dbReference type="SMR" id="Q9UIJ7"/>
<dbReference type="BioGRID" id="119127">
    <property type="interactions" value="70"/>
</dbReference>
<dbReference type="FunCoup" id="Q9UIJ7">
    <property type="interactions" value="1239"/>
</dbReference>
<dbReference type="IntAct" id="Q9UIJ7">
    <property type="interactions" value="27"/>
</dbReference>
<dbReference type="MINT" id="Q9UIJ7"/>
<dbReference type="STRING" id="9606.ENSP00000371230"/>
<dbReference type="CarbonylDB" id="Q9UIJ7"/>
<dbReference type="GlyGen" id="Q9UIJ7">
    <property type="glycosylation" value="2 sites, 1 N-linked glycan (1 site), 1 O-linked glycan (1 site)"/>
</dbReference>
<dbReference type="iPTMnet" id="Q9UIJ7"/>
<dbReference type="PhosphoSitePlus" id="Q9UIJ7"/>
<dbReference type="BioMuta" id="AK3"/>
<dbReference type="DMDM" id="23831297"/>
<dbReference type="OGP" id="Q9UIJ7"/>
<dbReference type="REPRODUCTION-2DPAGE" id="IPI00465256"/>
<dbReference type="jPOST" id="Q9UIJ7"/>
<dbReference type="MassIVE" id="Q9UIJ7"/>
<dbReference type="PaxDb" id="9606-ENSP00000371230"/>
<dbReference type="PeptideAtlas" id="Q9UIJ7"/>
<dbReference type="ProteomicsDB" id="18112"/>
<dbReference type="ProteomicsDB" id="84535">
    <molecule id="Q9UIJ7-1"/>
</dbReference>
<dbReference type="ProteomicsDB" id="84536">
    <molecule id="Q9UIJ7-2"/>
</dbReference>
<dbReference type="Pumba" id="Q9UIJ7"/>
<dbReference type="TopDownProteomics" id="Q9UIJ7-1">
    <molecule id="Q9UIJ7-1"/>
</dbReference>
<dbReference type="TopDownProteomics" id="Q9UIJ7-3">
    <molecule id="Q9UIJ7-3"/>
</dbReference>
<dbReference type="Antibodypedia" id="24061">
    <property type="antibodies" value="405 antibodies from 27 providers"/>
</dbReference>
<dbReference type="DNASU" id="50808"/>
<dbReference type="Ensembl" id="ENST00000359883.6">
    <molecule id="Q9UIJ7-2"/>
    <property type="protein sequence ID" value="ENSP00000352948.2"/>
    <property type="gene ID" value="ENSG00000147853.17"/>
</dbReference>
<dbReference type="Ensembl" id="ENST00000381809.8">
    <molecule id="Q9UIJ7-1"/>
    <property type="protein sequence ID" value="ENSP00000371230.3"/>
    <property type="gene ID" value="ENSG00000147853.17"/>
</dbReference>
<dbReference type="Ensembl" id="ENST00000447596.4">
    <molecule id="Q9UIJ7-3"/>
    <property type="protein sequence ID" value="ENSP00000413933.2"/>
    <property type="gene ID" value="ENSG00000147853.17"/>
</dbReference>
<dbReference type="Ensembl" id="ENST00000611749.4">
    <molecule id="Q9UIJ7-2"/>
    <property type="protein sequence ID" value="ENSP00000482308.1"/>
    <property type="gene ID" value="ENSG00000147853.17"/>
</dbReference>
<dbReference type="GeneID" id="50808"/>
<dbReference type="KEGG" id="hsa:50808"/>
<dbReference type="MANE-Select" id="ENST00000381809.8">
    <property type="protein sequence ID" value="ENSP00000371230.3"/>
    <property type="RefSeq nucleotide sequence ID" value="NM_016282.4"/>
    <property type="RefSeq protein sequence ID" value="NP_057366.2"/>
</dbReference>
<dbReference type="UCSC" id="uc003ziq.4">
    <molecule id="Q9UIJ7-1"/>
    <property type="organism name" value="human"/>
</dbReference>
<dbReference type="AGR" id="HGNC:17376"/>
<dbReference type="CTD" id="50808"/>
<dbReference type="DisGeNET" id="50808"/>
<dbReference type="GeneCards" id="AK3"/>
<dbReference type="HGNC" id="HGNC:17376">
    <property type="gene designation" value="AK3"/>
</dbReference>
<dbReference type="HPA" id="ENSG00000147853">
    <property type="expression patterns" value="Tissue enhanced (skeletal)"/>
</dbReference>
<dbReference type="MIM" id="609290">
    <property type="type" value="gene"/>
</dbReference>
<dbReference type="neXtProt" id="NX_Q9UIJ7"/>
<dbReference type="OpenTargets" id="ENSG00000147853"/>
<dbReference type="PharmGKB" id="PA164741184"/>
<dbReference type="VEuPathDB" id="HostDB:ENSG00000147853"/>
<dbReference type="eggNOG" id="KOG3078">
    <property type="taxonomic scope" value="Eukaryota"/>
</dbReference>
<dbReference type="GeneTree" id="ENSGT00940000155120"/>
<dbReference type="HOGENOM" id="CLU_032354_1_1_1"/>
<dbReference type="InParanoid" id="Q9UIJ7"/>
<dbReference type="OMA" id="TIAHFST"/>
<dbReference type="OrthoDB" id="439792at2759"/>
<dbReference type="PAN-GO" id="Q9UIJ7">
    <property type="GO annotations" value="5 GO annotations based on evolutionary models"/>
</dbReference>
<dbReference type="PhylomeDB" id="Q9UIJ7"/>
<dbReference type="TreeFam" id="TF312916"/>
<dbReference type="BRENDA" id="2.7.4.10">
    <property type="organism ID" value="2681"/>
</dbReference>
<dbReference type="PathwayCommons" id="Q9UIJ7"/>
<dbReference type="Reactome" id="R-HSA-983231">
    <property type="pathway name" value="Factors involved in megakaryocyte development and platelet production"/>
</dbReference>
<dbReference type="SignaLink" id="Q9UIJ7"/>
<dbReference type="BioGRID-ORCS" id="50808">
    <property type="hits" value="40 hits in 1187 CRISPR screens"/>
</dbReference>
<dbReference type="CD-CODE" id="91857CE7">
    <property type="entry name" value="Nucleolus"/>
</dbReference>
<dbReference type="CD-CODE" id="FB4E32DD">
    <property type="entry name" value="Presynaptic clusters and postsynaptic densities"/>
</dbReference>
<dbReference type="ChiTaRS" id="AK3">
    <property type="organism name" value="human"/>
</dbReference>
<dbReference type="EvolutionaryTrace" id="Q9UIJ7"/>
<dbReference type="GenomeRNAi" id="50808"/>
<dbReference type="Pharos" id="Q9UIJ7">
    <property type="development level" value="Tbio"/>
</dbReference>
<dbReference type="PRO" id="PR:Q9UIJ7"/>
<dbReference type="Proteomes" id="UP000005640">
    <property type="component" value="Chromosome 9"/>
</dbReference>
<dbReference type="RNAct" id="Q9UIJ7">
    <property type="molecule type" value="protein"/>
</dbReference>
<dbReference type="Bgee" id="ENSG00000147853">
    <property type="expression patterns" value="Expressed in cardiac muscle of right atrium and 194 other cell types or tissues"/>
</dbReference>
<dbReference type="GO" id="GO:0005737">
    <property type="term" value="C:cytoplasm"/>
    <property type="evidence" value="ECO:0000318"/>
    <property type="project" value="GO_Central"/>
</dbReference>
<dbReference type="GO" id="GO:0005759">
    <property type="term" value="C:mitochondrial matrix"/>
    <property type="evidence" value="ECO:0000250"/>
    <property type="project" value="BHF-UCL"/>
</dbReference>
<dbReference type="GO" id="GO:0005739">
    <property type="term" value="C:mitochondrion"/>
    <property type="evidence" value="ECO:0000314"/>
    <property type="project" value="HPA"/>
</dbReference>
<dbReference type="GO" id="GO:0005524">
    <property type="term" value="F:ATP binding"/>
    <property type="evidence" value="ECO:0007669"/>
    <property type="project" value="InterPro"/>
</dbReference>
<dbReference type="GO" id="GO:0005525">
    <property type="term" value="F:GTP binding"/>
    <property type="evidence" value="ECO:0007669"/>
    <property type="project" value="UniProtKB-KW"/>
</dbReference>
<dbReference type="GO" id="GO:0016874">
    <property type="term" value="F:ligase activity"/>
    <property type="evidence" value="ECO:0007669"/>
    <property type="project" value="UniProtKB-KW"/>
</dbReference>
<dbReference type="GO" id="GO:0046899">
    <property type="term" value="F:nucleoside triphosphate adenylate kinase activity"/>
    <property type="evidence" value="ECO:0000314"/>
    <property type="project" value="BHF-UCL"/>
</dbReference>
<dbReference type="GO" id="GO:0006172">
    <property type="term" value="P:ADP biosynthetic process"/>
    <property type="evidence" value="ECO:0007669"/>
    <property type="project" value="UniProtKB-UniRule"/>
</dbReference>
<dbReference type="GO" id="GO:0046033">
    <property type="term" value="P:AMP metabolic process"/>
    <property type="evidence" value="ECO:0000314"/>
    <property type="project" value="BHF-UCL"/>
</dbReference>
<dbReference type="GO" id="GO:0007596">
    <property type="term" value="P:blood coagulation"/>
    <property type="evidence" value="ECO:0000304"/>
    <property type="project" value="Reactome"/>
</dbReference>
<dbReference type="GO" id="GO:0046039">
    <property type="term" value="P:GTP metabolic process"/>
    <property type="evidence" value="ECO:0000314"/>
    <property type="project" value="BHF-UCL"/>
</dbReference>
<dbReference type="GO" id="GO:0046041">
    <property type="term" value="P:ITP metabolic process"/>
    <property type="evidence" value="ECO:0000314"/>
    <property type="project" value="BHF-UCL"/>
</dbReference>
<dbReference type="GO" id="GO:0009142">
    <property type="term" value="P:nucleoside triphosphate biosynthetic process"/>
    <property type="evidence" value="ECO:0000318"/>
    <property type="project" value="GO_Central"/>
</dbReference>
<dbReference type="GO" id="GO:0046051">
    <property type="term" value="P:UTP metabolic process"/>
    <property type="evidence" value="ECO:0000314"/>
    <property type="project" value="BHF-UCL"/>
</dbReference>
<dbReference type="CDD" id="cd01428">
    <property type="entry name" value="ADK"/>
    <property type="match status" value="1"/>
</dbReference>
<dbReference type="FunFam" id="3.40.50.300:FF:000106">
    <property type="entry name" value="Adenylate kinase mitochondrial"/>
    <property type="match status" value="1"/>
</dbReference>
<dbReference type="Gene3D" id="3.40.50.300">
    <property type="entry name" value="P-loop containing nucleotide triphosphate hydrolases"/>
    <property type="match status" value="1"/>
</dbReference>
<dbReference type="HAMAP" id="MF_00235">
    <property type="entry name" value="Adenylate_kinase_Adk"/>
    <property type="match status" value="1"/>
</dbReference>
<dbReference type="HAMAP" id="MF_03169">
    <property type="entry name" value="Adenylate_kinase_AK3"/>
    <property type="match status" value="1"/>
</dbReference>
<dbReference type="InterPro" id="IPR006259">
    <property type="entry name" value="Adenyl_kin_sub"/>
</dbReference>
<dbReference type="InterPro" id="IPR000850">
    <property type="entry name" value="Adenylat/UMP-CMP_kin"/>
</dbReference>
<dbReference type="InterPro" id="IPR033690">
    <property type="entry name" value="Adenylat_kinase_CS"/>
</dbReference>
<dbReference type="InterPro" id="IPR007862">
    <property type="entry name" value="Adenylate_kinase_lid-dom"/>
</dbReference>
<dbReference type="InterPro" id="IPR036193">
    <property type="entry name" value="ADK_active_lid_dom_sf"/>
</dbReference>
<dbReference type="InterPro" id="IPR028586">
    <property type="entry name" value="AK3/Ak4_mitochondrial"/>
</dbReference>
<dbReference type="InterPro" id="IPR027417">
    <property type="entry name" value="P-loop_NTPase"/>
</dbReference>
<dbReference type="NCBIfam" id="TIGR01351">
    <property type="entry name" value="adk"/>
    <property type="match status" value="1"/>
</dbReference>
<dbReference type="PANTHER" id="PTHR23359">
    <property type="entry name" value="NUCLEOTIDE KINASE"/>
    <property type="match status" value="1"/>
</dbReference>
<dbReference type="Pfam" id="PF00406">
    <property type="entry name" value="ADK"/>
    <property type="match status" value="1"/>
</dbReference>
<dbReference type="Pfam" id="PF05191">
    <property type="entry name" value="ADK_lid"/>
    <property type="match status" value="1"/>
</dbReference>
<dbReference type="PRINTS" id="PR00094">
    <property type="entry name" value="ADENYLTKNASE"/>
</dbReference>
<dbReference type="SUPFAM" id="SSF57774">
    <property type="entry name" value="Microbial and mitochondrial ADK, insert 'zinc finger' domain"/>
    <property type="match status" value="1"/>
</dbReference>
<dbReference type="SUPFAM" id="SSF52540">
    <property type="entry name" value="P-loop containing nucleoside triphosphate hydrolases"/>
    <property type="match status" value="1"/>
</dbReference>
<dbReference type="PROSITE" id="PS00113">
    <property type="entry name" value="ADENYLATE_KINASE"/>
    <property type="match status" value="1"/>
</dbReference>
<organism>
    <name type="scientific">Homo sapiens</name>
    <name type="common">Human</name>
    <dbReference type="NCBI Taxonomy" id="9606"/>
    <lineage>
        <taxon>Eukaryota</taxon>
        <taxon>Metazoa</taxon>
        <taxon>Chordata</taxon>
        <taxon>Craniata</taxon>
        <taxon>Vertebrata</taxon>
        <taxon>Euteleostomi</taxon>
        <taxon>Mammalia</taxon>
        <taxon>Eutheria</taxon>
        <taxon>Euarchontoglires</taxon>
        <taxon>Primates</taxon>
        <taxon>Haplorrhini</taxon>
        <taxon>Catarrhini</taxon>
        <taxon>Hominidae</taxon>
        <taxon>Homo</taxon>
    </lineage>
</organism>
<sequence>MGASARLLRAVIMGAPGSGKGTVSSRITTHFELKHLSSGDLLRDNMLRGTEIGVLAKAFIDQGKLIPDDVMTRLALHELKNLTQYSWLLDGFPRTLPQAEALDRAYQIDTVINLNVPFEVIKQRLTARWIHPASGRVYNIEFNPPKTVGIDDLTGEPLIQREDDKPETVIKRLKAYEDQTKPVLEYYQKKGVLETFSGTETNKIWPYVYAFLQTKVPQRSQKASVTP</sequence>
<gene>
    <name evidence="3 15" type="primary">AK3</name>
    <name evidence="15" type="synonym">AK3L1</name>
    <name evidence="15" type="synonym">AK6</name>
    <name type="synonym">AKL3L</name>
</gene>
<proteinExistence type="evidence at protein level"/>
<evidence type="ECO:0000250" key="1">
    <source>
        <dbReference type="UniProtKB" id="P08760"/>
    </source>
</evidence>
<evidence type="ECO:0000250" key="2">
    <source>
        <dbReference type="UniProtKB" id="Q9WTP7"/>
    </source>
</evidence>
<evidence type="ECO:0000255" key="3">
    <source>
        <dbReference type="HAMAP-Rule" id="MF_03169"/>
    </source>
</evidence>
<evidence type="ECO:0000269" key="4">
    <source>
    </source>
</evidence>
<evidence type="ECO:0000269" key="5">
    <source>
    </source>
</evidence>
<evidence type="ECO:0000269" key="6">
    <source ref="11"/>
</evidence>
<evidence type="ECO:0000303" key="7">
    <source>
    </source>
</evidence>
<evidence type="ECO:0000303" key="8">
    <source>
    </source>
</evidence>
<evidence type="ECO:0000303" key="9">
    <source ref="2"/>
</evidence>
<evidence type="ECO:0000305" key="10"/>
<evidence type="ECO:0000305" key="11">
    <source>
    </source>
</evidence>
<evidence type="ECO:0000305" key="12">
    <source>
    </source>
</evidence>
<evidence type="ECO:0000305" key="13">
    <source>
    </source>
</evidence>
<evidence type="ECO:0000305" key="14">
    <source ref="11"/>
</evidence>
<evidence type="ECO:0000312" key="15">
    <source>
        <dbReference type="HGNC" id="HGNC:17376"/>
    </source>
</evidence>
<evidence type="ECO:0007744" key="16">
    <source>
        <dbReference type="PDB" id="1ZD8"/>
    </source>
</evidence>
<evidence type="ECO:0007744" key="17">
    <source>
        <dbReference type="PDB" id="6ZJB"/>
    </source>
</evidence>
<evidence type="ECO:0007744" key="18">
    <source>
        <dbReference type="PDB" id="6ZJD"/>
    </source>
</evidence>
<evidence type="ECO:0007744" key="19">
    <source>
        <dbReference type="PDB" id="6ZJE"/>
    </source>
</evidence>
<evidence type="ECO:0007829" key="20">
    <source>
        <dbReference type="PDB" id="1ZD8"/>
    </source>
</evidence>
<evidence type="ECO:0007829" key="21">
    <source>
        <dbReference type="PDB" id="6ZJE"/>
    </source>
</evidence>
<protein>
    <recommendedName>
        <fullName evidence="11 13">GTP:AMP phosphotransferase AK3, mitochondrial</fullName>
        <ecNumber evidence="3 4 5">2.7.4.10</ecNumber>
    </recommendedName>
    <alternativeName>
        <fullName evidence="3 15">Adenylate kinase 3</fullName>
    </alternativeName>
    <alternativeName>
        <fullName evidence="3 15">Adenylate kinase 3 alpha-like 1</fullName>
    </alternativeName>
    <alternativeName>
        <fullName evidence="8">Adenylate kinase isozyme 3</fullName>
    </alternativeName>
</protein>
<accession>Q9UIJ7</accession>
<accession>B4DP58</accession>
<accession>D3DRI1</accession>
<accession>E7ET30</accession>
<accession>Q5VYW6</accession>
<accession>Q9H576</accession>
<accession>Q9HC01</accession>
<accession>Q9NPB4</accession>
<keyword id="KW-0002">3D-structure</keyword>
<keyword id="KW-0007">Acetylation</keyword>
<keyword id="KW-0025">Alternative splicing</keyword>
<keyword id="KW-0342">GTP-binding</keyword>
<keyword id="KW-0418">Kinase</keyword>
<keyword id="KW-0436">Ligase</keyword>
<keyword id="KW-0496">Mitochondrion</keyword>
<keyword id="KW-0547">Nucleotide-binding</keyword>
<keyword id="KW-0597">Phosphoprotein</keyword>
<keyword id="KW-1267">Proteomics identification</keyword>
<keyword id="KW-1185">Reference proteome</keyword>
<keyword id="KW-0808">Transferase</keyword>
<feature type="chain" id="PRO_0000158922" description="GTP:AMP phosphotransferase AK3, mitochondrial">
    <location>
        <begin position="1"/>
        <end position="227"/>
    </location>
</feature>
<feature type="region of interest" description="NMP" evidence="3 6">
    <location>
        <begin position="37"/>
        <end position="66"/>
    </location>
</feature>
<feature type="region of interest" description="LID" evidence="3 6">
    <location>
        <begin position="127"/>
        <end position="164"/>
    </location>
</feature>
<feature type="binding site" evidence="12 17">
    <location>
        <position position="17"/>
    </location>
    <ligand>
        <name>GTP</name>
        <dbReference type="ChEBI" id="CHEBI:37565"/>
    </ligand>
</feature>
<feature type="binding site" evidence="12 17">
    <location>
        <position position="19"/>
    </location>
    <ligand>
        <name>GTP</name>
        <dbReference type="ChEBI" id="CHEBI:37565"/>
    </ligand>
</feature>
<feature type="binding site" evidence="12 17">
    <location>
        <position position="20"/>
    </location>
    <ligand>
        <name>GTP</name>
        <dbReference type="ChEBI" id="CHEBI:37565"/>
    </ligand>
</feature>
<feature type="binding site" evidence="12 17">
    <location>
        <position position="21"/>
    </location>
    <ligand>
        <name>GTP</name>
        <dbReference type="ChEBI" id="CHEBI:37565"/>
    </ligand>
</feature>
<feature type="binding site" evidence="12 17">
    <location>
        <position position="22"/>
    </location>
    <ligand>
        <name>GTP</name>
        <dbReference type="ChEBI" id="CHEBI:37565"/>
    </ligand>
</feature>
<feature type="binding site" evidence="12 17">
    <location>
        <position position="38"/>
    </location>
    <ligand>
        <name>AMP</name>
        <dbReference type="ChEBI" id="CHEBI:456215"/>
    </ligand>
</feature>
<feature type="binding site" evidence="12 17">
    <location>
        <position position="43"/>
    </location>
    <ligand>
        <name>AMP</name>
        <dbReference type="ChEBI" id="CHEBI:456215"/>
    </ligand>
</feature>
<feature type="binding site" evidence="12 17">
    <location>
        <position position="64"/>
    </location>
    <ligand>
        <name>AMP</name>
        <dbReference type="ChEBI" id="CHEBI:456215"/>
    </ligand>
</feature>
<feature type="binding site" evidence="12 17">
    <location>
        <position position="91"/>
    </location>
    <ligand>
        <name>AMP</name>
        <dbReference type="ChEBI" id="CHEBI:456215"/>
    </ligand>
</feature>
<feature type="binding site" evidence="1">
    <location>
        <position position="94"/>
    </location>
    <ligand>
        <name>AMP</name>
        <dbReference type="ChEBI" id="CHEBI:456215"/>
    </ligand>
</feature>
<feature type="binding site" evidence="12 17">
    <location>
        <position position="98"/>
    </location>
    <ligand>
        <name>AMP</name>
        <dbReference type="ChEBI" id="CHEBI:456215"/>
    </ligand>
</feature>
<feature type="binding site" evidence="12 17">
    <location>
        <position position="128"/>
    </location>
    <ligand>
        <name>GTP</name>
        <dbReference type="ChEBI" id="CHEBI:37565"/>
    </ligand>
</feature>
<feature type="binding site" evidence="12 17">
    <location>
        <position position="138"/>
    </location>
    <ligand>
        <name>GTP</name>
        <dbReference type="ChEBI" id="CHEBI:37565"/>
    </ligand>
</feature>
<feature type="binding site" evidence="12 17">
    <location>
        <position position="139"/>
    </location>
    <ligand>
        <name>GTP</name>
        <dbReference type="ChEBI" id="CHEBI:37565"/>
    </ligand>
</feature>
<feature type="binding site" evidence="12 17">
    <location>
        <position position="161"/>
    </location>
    <ligand>
        <name>GTP</name>
        <dbReference type="ChEBI" id="CHEBI:37565"/>
    </ligand>
</feature>
<feature type="binding site" evidence="12 17">
    <location>
        <position position="172"/>
    </location>
    <ligand>
        <name>GTP</name>
        <dbReference type="ChEBI" id="CHEBI:37565"/>
    </ligand>
</feature>
<feature type="binding site" evidence="12 17">
    <location>
        <position position="201"/>
    </location>
    <ligand>
        <name>GTP</name>
        <dbReference type="ChEBI" id="CHEBI:37565"/>
    </ligand>
</feature>
<feature type="modified residue" description="N6-succinyllysine" evidence="2">
    <location>
        <position position="20"/>
    </location>
</feature>
<feature type="modified residue" description="N6-acetyllysine" evidence="2">
    <location>
        <position position="34"/>
    </location>
</feature>
<feature type="modified residue" description="Phosphoserine" evidence="2">
    <location>
        <position position="37"/>
    </location>
</feature>
<feature type="modified residue" description="N6-succinyllysine" evidence="2">
    <location>
        <position position="57"/>
    </location>
</feature>
<feature type="modified residue" description="N6-acetyllysine; alternate" evidence="2">
    <location>
        <position position="64"/>
    </location>
</feature>
<feature type="modified residue" description="N6-succinyllysine; alternate" evidence="2">
    <location>
        <position position="64"/>
    </location>
</feature>
<feature type="modified residue" description="N6-acetyllysine; alternate" evidence="2">
    <location>
        <position position="80"/>
    </location>
</feature>
<feature type="modified residue" description="N6-succinyllysine; alternate" evidence="2">
    <location>
        <position position="80"/>
    </location>
</feature>
<feature type="modified residue" description="N6-acetyllysine; alternate" evidence="2">
    <location>
        <position position="174"/>
    </location>
</feature>
<feature type="modified residue" description="N6-succinyllysine; alternate" evidence="2">
    <location>
        <position position="174"/>
    </location>
</feature>
<feature type="modified residue" description="N6-acetyllysine; alternate" evidence="2">
    <location>
        <position position="189"/>
    </location>
</feature>
<feature type="modified residue" description="N6-succinyllysine; alternate" evidence="2">
    <location>
        <position position="189"/>
    </location>
</feature>
<feature type="modified residue" description="N6-acetyllysine" evidence="2">
    <location>
        <position position="203"/>
    </location>
</feature>
<feature type="splice variant" id="VSP_043090" description="In isoform 2." evidence="7 9">
    <location>
        <begin position="1"/>
        <end position="70"/>
    </location>
</feature>
<feature type="splice variant" id="VSP_044876" description="In isoform 3." evidence="7">
    <location>
        <begin position="51"/>
        <end position="90"/>
    </location>
</feature>
<feature type="sequence conflict" description="In Ref. 1; BAA87913." evidence="10" ref="1">
    <original>A</original>
    <variation>G</variation>
    <location>
        <position position="5"/>
    </location>
</feature>
<feature type="sequence conflict" description="In Ref. 1; BAA87913." evidence="10" ref="1">
    <original>S</original>
    <variation>R</variation>
    <location>
        <position position="38"/>
    </location>
</feature>
<feature type="sequence conflict" description="In Ref. 1; BAA87913." evidence="10" ref="1">
    <original>K</original>
    <variation>Q</variation>
    <location>
        <position position="57"/>
    </location>
</feature>
<feature type="sequence conflict" description="In Ref. 1; BAA87913." evidence="10" ref="1">
    <original>DVM</original>
    <variation>YVT</variation>
    <location>
        <begin position="69"/>
        <end position="71"/>
    </location>
</feature>
<feature type="sequence conflict" description="In Ref. 3; BAG60470." evidence="10" ref="3">
    <original>K</original>
    <variation>E</variation>
    <location>
        <position position="181"/>
    </location>
</feature>
<feature type="strand" evidence="20">
    <location>
        <begin position="9"/>
        <end position="14"/>
    </location>
</feature>
<feature type="helix" evidence="20">
    <location>
        <begin position="20"/>
        <end position="30"/>
    </location>
</feature>
<feature type="strand" evidence="20">
    <location>
        <begin position="31"/>
        <end position="37"/>
    </location>
</feature>
<feature type="helix" evidence="20">
    <location>
        <begin position="38"/>
        <end position="48"/>
    </location>
</feature>
<feature type="helix" evidence="20">
    <location>
        <begin position="51"/>
        <end position="60"/>
    </location>
</feature>
<feature type="turn" evidence="20">
    <location>
        <begin position="61"/>
        <end position="63"/>
    </location>
</feature>
<feature type="helix" evidence="20">
    <location>
        <begin position="68"/>
        <end position="80"/>
    </location>
</feature>
<feature type="turn" evidence="21">
    <location>
        <begin position="81"/>
        <end position="84"/>
    </location>
</feature>
<feature type="strand" evidence="20">
    <location>
        <begin position="87"/>
        <end position="91"/>
    </location>
</feature>
<feature type="helix" evidence="20">
    <location>
        <begin position="96"/>
        <end position="103"/>
    </location>
</feature>
<feature type="strand" evidence="20">
    <location>
        <begin position="110"/>
        <end position="115"/>
    </location>
</feature>
<feature type="helix" evidence="20">
    <location>
        <begin position="118"/>
        <end position="125"/>
    </location>
</feature>
<feature type="strand" evidence="20">
    <location>
        <begin position="128"/>
        <end position="131"/>
    </location>
</feature>
<feature type="turn" evidence="20">
    <location>
        <begin position="132"/>
        <end position="135"/>
    </location>
</feature>
<feature type="strand" evidence="20">
    <location>
        <begin position="136"/>
        <end position="139"/>
    </location>
</feature>
<feature type="turn" evidence="20">
    <location>
        <begin position="140"/>
        <end position="142"/>
    </location>
</feature>
<feature type="turn" evidence="20">
    <location>
        <begin position="152"/>
        <end position="154"/>
    </location>
</feature>
<feature type="helix" evidence="20">
    <location>
        <begin position="162"/>
        <end position="164"/>
    </location>
</feature>
<feature type="helix" evidence="20">
    <location>
        <begin position="166"/>
        <end position="189"/>
    </location>
</feature>
<feature type="strand" evidence="20">
    <location>
        <begin position="193"/>
        <end position="197"/>
    </location>
</feature>
<feature type="helix" evidence="20">
    <location>
        <begin position="201"/>
        <end position="212"/>
    </location>
</feature>
<feature type="turn" evidence="20">
    <location>
        <begin position="213"/>
        <end position="215"/>
    </location>
</feature>
<name>KAD3_HUMAN</name>
<comment type="function">
    <text evidence="4 5 11 13">Mitochondrial adenylate kinase with a specific GTP:AMP phosphotransferase activity (PubMed:11485571, PubMed:32822537). Could also use ITP as phosphate donor (PubMed:11485571). Its physiological function is to recycle GTP into GDP which is necessary for the TCA cycle in the mitochondrial matrix (Probable).</text>
</comment>
<comment type="catalytic activity">
    <reaction evidence="3 4">
        <text>a ribonucleoside 5'-triphosphate + AMP = a ribonucleoside 5'-diphosphate + ADP</text>
        <dbReference type="Rhea" id="RHEA:13749"/>
        <dbReference type="ChEBI" id="CHEBI:57930"/>
        <dbReference type="ChEBI" id="CHEBI:61557"/>
        <dbReference type="ChEBI" id="CHEBI:456215"/>
        <dbReference type="ChEBI" id="CHEBI:456216"/>
        <dbReference type="EC" id="2.7.4.10"/>
    </reaction>
</comment>
<comment type="catalytic activity">
    <reaction evidence="4 5">
        <text>GTP + AMP = GDP + ADP</text>
        <dbReference type="Rhea" id="RHEA:29863"/>
        <dbReference type="ChEBI" id="CHEBI:37565"/>
        <dbReference type="ChEBI" id="CHEBI:58189"/>
        <dbReference type="ChEBI" id="CHEBI:456215"/>
        <dbReference type="ChEBI" id="CHEBI:456216"/>
    </reaction>
</comment>
<comment type="catalytic activity">
    <reaction evidence="4">
        <text>ITP + AMP = IDP + ADP</text>
        <dbReference type="Rhea" id="RHEA:29867"/>
        <dbReference type="ChEBI" id="CHEBI:58280"/>
        <dbReference type="ChEBI" id="CHEBI:61402"/>
        <dbReference type="ChEBI" id="CHEBI:456215"/>
        <dbReference type="ChEBI" id="CHEBI:456216"/>
    </reaction>
</comment>
<comment type="activity regulation">
    <text evidence="5">Inhibited by ATP.</text>
</comment>
<comment type="biophysicochemical properties">
    <kinetics>
        <KM evidence="5">10 uM for GTP</KM>
        <text evidence="5">kcat is 57 sec(-1) with GTP as phosphate donor.</text>
    </kinetics>
</comment>
<comment type="subunit">
    <text evidence="2 3">Monomer.</text>
</comment>
<comment type="interaction">
    <interactant intactId="EBI-3916527">
        <id>Q9UIJ7</id>
    </interactant>
    <interactant intactId="EBI-1222467">
        <id>P02649</id>
        <label>APOE</label>
    </interactant>
    <organismsDiffer>false</organismsDiffer>
    <experiments>3</experiments>
</comment>
<comment type="interaction">
    <interactant intactId="EBI-3916527">
        <id>Q9UIJ7</id>
    </interactant>
    <interactant intactId="EBI-743771">
        <id>Q92624</id>
        <label>APPBP2</label>
    </interactant>
    <organismsDiffer>false</organismsDiffer>
    <experiments>6</experiments>
</comment>
<comment type="interaction">
    <interactant intactId="EBI-3916527">
        <id>Q9UIJ7</id>
    </interactant>
    <interactant intactId="EBI-12275524">
        <id>P23560-2</id>
        <label>BDNF</label>
    </interactant>
    <organismsDiffer>false</organismsDiffer>
    <experiments>3</experiments>
</comment>
<comment type="interaction">
    <interactant intactId="EBI-3916527">
        <id>Q9UIJ7</id>
    </interactant>
    <interactant intactId="EBI-11956479">
        <id>P23142-4</id>
        <label>FBLN1</label>
    </interactant>
    <organismsDiffer>false</organismsDiffer>
    <experiments>3</experiments>
</comment>
<comment type="interaction">
    <interactant intactId="EBI-3916527">
        <id>Q9UIJ7</id>
    </interactant>
    <interactant intactId="EBI-354056">
        <id>P04406</id>
        <label>GAPDH</label>
    </interactant>
    <organismsDiffer>false</organismsDiffer>
    <experiments>3</experiments>
</comment>
<comment type="interaction">
    <interactant intactId="EBI-3916527">
        <id>Q9UIJ7</id>
    </interactant>
    <interactant intactId="EBI-747754">
        <id>P28799</id>
        <label>GRN</label>
    </interactant>
    <organismsDiffer>false</organismsDiffer>
    <experiments>3</experiments>
</comment>
<comment type="interaction">
    <interactant intactId="EBI-3916527">
        <id>Q9UIJ7</id>
    </interactant>
    <interactant intactId="EBI-466029">
        <id>P42858</id>
        <label>HTT</label>
    </interactant>
    <organismsDiffer>false</organismsDiffer>
    <experiments>9</experiments>
</comment>
<comment type="interaction">
    <interactant intactId="EBI-3916527">
        <id>Q9UIJ7</id>
    </interactant>
    <interactant intactId="EBI-1055254">
        <id>Q8WXH2</id>
        <label>JPH3</label>
    </interactant>
    <organismsDiffer>false</organismsDiffer>
    <experiments>3</experiments>
</comment>
<comment type="interaction">
    <interactant intactId="EBI-3916527">
        <id>Q9UIJ7</id>
    </interactant>
    <interactant intactId="EBI-10171774">
        <id>P60410</id>
        <label>KRTAP10-8</label>
    </interactant>
    <organismsDiffer>false</organismsDiffer>
    <experiments>3</experiments>
</comment>
<comment type="interaction">
    <interactant intactId="EBI-3916527">
        <id>Q9UIJ7</id>
    </interactant>
    <interactant intactId="EBI-720609">
        <id>O76024</id>
        <label>WFS1</label>
    </interactant>
    <organismsDiffer>false</organismsDiffer>
    <experiments>3</experiments>
</comment>
<comment type="subcellular location">
    <subcellularLocation>
        <location evidence="3 4">Mitochondrion matrix</location>
    </subcellularLocation>
</comment>
<comment type="alternative products">
    <event type="alternative splicing"/>
    <isoform>
        <id>Q9UIJ7-1</id>
        <name>1</name>
        <sequence type="displayed"/>
    </isoform>
    <isoform>
        <id>Q9UIJ7-2</id>
        <name>2</name>
        <sequence type="described" ref="VSP_043090"/>
    </isoform>
    <isoform>
        <id>Q9UIJ7-3</id>
        <name>3</name>
        <sequence type="described" ref="VSP_044876"/>
    </isoform>
</comment>
<comment type="tissue specificity">
    <text evidence="4">Highly expressed in heart, skeletal muscle and liver, moderately expressed in pancreas and kidney, and weakly expressed in placenta, brain and lung.</text>
</comment>
<comment type="domain">
    <text evidence="3 14">Consists of three domains, a large central CORE domain and two small peripheral domains, NMPbind and LID, which undergo movements during catalysis. The LID domain closes over the site of phosphoryl transfer upon GTP binding. Assembling and dissambling the active center during each catalytic cycle provides an effective means to prevent GTP hydrolysis.</text>
</comment>
<comment type="similarity">
    <text evidence="3">Belongs to the adenylate kinase family. AK3 subfamily.</text>
</comment>
<reference key="1">
    <citation type="journal article" date="2001" name="Biochem. J.">
        <title>Structure and expression of human mitochondrial adenylate kinase targeted to the mitochondrial matrix.</title>
        <authorList>
            <person name="Noma T."/>
            <person name="Fujisawa K."/>
            <person name="Yamashiro Y."/>
            <person name="Shinohara M."/>
            <person name="Nakazawa A."/>
            <person name="Gondo T."/>
            <person name="Ishihara T."/>
            <person name="Yoshinobu K."/>
        </authorList>
    </citation>
    <scope>NUCLEOTIDE SEQUENCE [MRNA] (ISOFORM 1)</scope>
    <scope>FUNCTION</scope>
    <scope>CATALYTIC ACTIVITY</scope>
    <scope>TISSUE SPECIFICITY</scope>
    <scope>SUBCELLULAR LOCATION</scope>
    <source>
        <tissue>Liver</tissue>
    </source>
</reference>
<reference key="2">
    <citation type="submission" date="1999-09" db="EMBL/GenBank/DDBJ databases">
        <title>A novel gene expressed in human pheochromocytoma.</title>
        <authorList>
            <person name="Li Y."/>
            <person name="Peng Y."/>
            <person name="Jiang Z."/>
            <person name="Gu W."/>
            <person name="Han Z."/>
            <person name="Chen Z."/>
        </authorList>
    </citation>
    <scope>NUCLEOTIDE SEQUENCE [MRNA] (ISOFORM 2)</scope>
    <source>
        <tissue>Pheochromocytoma</tissue>
    </source>
</reference>
<reference key="3">
    <citation type="journal article" date="2004" name="Nat. Genet.">
        <title>Complete sequencing and characterization of 21,243 full-length human cDNAs.</title>
        <authorList>
            <person name="Ota T."/>
            <person name="Suzuki Y."/>
            <person name="Nishikawa T."/>
            <person name="Otsuki T."/>
            <person name="Sugiyama T."/>
            <person name="Irie R."/>
            <person name="Wakamatsu A."/>
            <person name="Hayashi K."/>
            <person name="Sato H."/>
            <person name="Nagai K."/>
            <person name="Kimura K."/>
            <person name="Makita H."/>
            <person name="Sekine M."/>
            <person name="Obayashi M."/>
            <person name="Nishi T."/>
            <person name="Shibahara T."/>
            <person name="Tanaka T."/>
            <person name="Ishii S."/>
            <person name="Yamamoto J."/>
            <person name="Saito K."/>
            <person name="Kawai Y."/>
            <person name="Isono Y."/>
            <person name="Nakamura Y."/>
            <person name="Nagahari K."/>
            <person name="Murakami K."/>
            <person name="Yasuda T."/>
            <person name="Iwayanagi T."/>
            <person name="Wagatsuma M."/>
            <person name="Shiratori A."/>
            <person name="Sudo H."/>
            <person name="Hosoiri T."/>
            <person name="Kaku Y."/>
            <person name="Kodaira H."/>
            <person name="Kondo H."/>
            <person name="Sugawara M."/>
            <person name="Takahashi M."/>
            <person name="Kanda K."/>
            <person name="Yokoi T."/>
            <person name="Furuya T."/>
            <person name="Kikkawa E."/>
            <person name="Omura Y."/>
            <person name="Abe K."/>
            <person name="Kamihara K."/>
            <person name="Katsuta N."/>
            <person name="Sato K."/>
            <person name="Tanikawa M."/>
            <person name="Yamazaki M."/>
            <person name="Ninomiya K."/>
            <person name="Ishibashi T."/>
            <person name="Yamashita H."/>
            <person name="Murakawa K."/>
            <person name="Fujimori K."/>
            <person name="Tanai H."/>
            <person name="Kimata M."/>
            <person name="Watanabe M."/>
            <person name="Hiraoka S."/>
            <person name="Chiba Y."/>
            <person name="Ishida S."/>
            <person name="Ono Y."/>
            <person name="Takiguchi S."/>
            <person name="Watanabe S."/>
            <person name="Yosida M."/>
            <person name="Hotuta T."/>
            <person name="Kusano J."/>
            <person name="Kanehori K."/>
            <person name="Takahashi-Fujii A."/>
            <person name="Hara H."/>
            <person name="Tanase T.-O."/>
            <person name="Nomura Y."/>
            <person name="Togiya S."/>
            <person name="Komai F."/>
            <person name="Hara R."/>
            <person name="Takeuchi K."/>
            <person name="Arita M."/>
            <person name="Imose N."/>
            <person name="Musashino K."/>
            <person name="Yuuki H."/>
            <person name="Oshima A."/>
            <person name="Sasaki N."/>
            <person name="Aotsuka S."/>
            <person name="Yoshikawa Y."/>
            <person name="Matsunawa H."/>
            <person name="Ichihara T."/>
            <person name="Shiohata N."/>
            <person name="Sano S."/>
            <person name="Moriya S."/>
            <person name="Momiyama H."/>
            <person name="Satoh N."/>
            <person name="Takami S."/>
            <person name="Terashima Y."/>
            <person name="Suzuki O."/>
            <person name="Nakagawa S."/>
            <person name="Senoh A."/>
            <person name="Mizoguchi H."/>
            <person name="Goto Y."/>
            <person name="Shimizu F."/>
            <person name="Wakebe H."/>
            <person name="Hishigaki H."/>
            <person name="Watanabe T."/>
            <person name="Sugiyama A."/>
            <person name="Takemoto M."/>
            <person name="Kawakami B."/>
            <person name="Yamazaki M."/>
            <person name="Watanabe K."/>
            <person name="Kumagai A."/>
            <person name="Itakura S."/>
            <person name="Fukuzumi Y."/>
            <person name="Fujimori Y."/>
            <person name="Komiyama M."/>
            <person name="Tashiro H."/>
            <person name="Tanigami A."/>
            <person name="Fujiwara T."/>
            <person name="Ono T."/>
            <person name="Yamada K."/>
            <person name="Fujii Y."/>
            <person name="Ozaki K."/>
            <person name="Hirao M."/>
            <person name="Ohmori Y."/>
            <person name="Kawabata A."/>
            <person name="Hikiji T."/>
            <person name="Kobatake N."/>
            <person name="Inagaki H."/>
            <person name="Ikema Y."/>
            <person name="Okamoto S."/>
            <person name="Okitani R."/>
            <person name="Kawakami T."/>
            <person name="Noguchi S."/>
            <person name="Itoh T."/>
            <person name="Shigeta K."/>
            <person name="Senba T."/>
            <person name="Matsumura K."/>
            <person name="Nakajima Y."/>
            <person name="Mizuno T."/>
            <person name="Morinaga M."/>
            <person name="Sasaki M."/>
            <person name="Togashi T."/>
            <person name="Oyama M."/>
            <person name="Hata H."/>
            <person name="Watanabe M."/>
            <person name="Komatsu T."/>
            <person name="Mizushima-Sugano J."/>
            <person name="Satoh T."/>
            <person name="Shirai Y."/>
            <person name="Takahashi Y."/>
            <person name="Nakagawa K."/>
            <person name="Okumura K."/>
            <person name="Nagase T."/>
            <person name="Nomura N."/>
            <person name="Kikuchi H."/>
            <person name="Masuho Y."/>
            <person name="Yamashita R."/>
            <person name="Nakai K."/>
            <person name="Yada T."/>
            <person name="Nakamura Y."/>
            <person name="Ohara O."/>
            <person name="Isogai T."/>
            <person name="Sugano S."/>
        </authorList>
    </citation>
    <scope>NUCLEOTIDE SEQUENCE [LARGE SCALE MRNA] (ISOFORMS 1; 2 AND 3)</scope>
    <source>
        <tissue>Placenta</tissue>
    </source>
</reference>
<reference key="4">
    <citation type="journal article" date="2004" name="Nature">
        <title>DNA sequence and analysis of human chromosome 9.</title>
        <authorList>
            <person name="Humphray S.J."/>
            <person name="Oliver K."/>
            <person name="Hunt A.R."/>
            <person name="Plumb R.W."/>
            <person name="Loveland J.E."/>
            <person name="Howe K.L."/>
            <person name="Andrews T.D."/>
            <person name="Searle S."/>
            <person name="Hunt S.E."/>
            <person name="Scott C.E."/>
            <person name="Jones M.C."/>
            <person name="Ainscough R."/>
            <person name="Almeida J.P."/>
            <person name="Ambrose K.D."/>
            <person name="Ashwell R.I.S."/>
            <person name="Babbage A.K."/>
            <person name="Babbage S."/>
            <person name="Bagguley C.L."/>
            <person name="Bailey J."/>
            <person name="Banerjee R."/>
            <person name="Barker D.J."/>
            <person name="Barlow K.F."/>
            <person name="Bates K."/>
            <person name="Beasley H."/>
            <person name="Beasley O."/>
            <person name="Bird C.P."/>
            <person name="Bray-Allen S."/>
            <person name="Brown A.J."/>
            <person name="Brown J.Y."/>
            <person name="Burford D."/>
            <person name="Burrill W."/>
            <person name="Burton J."/>
            <person name="Carder C."/>
            <person name="Carter N.P."/>
            <person name="Chapman J.C."/>
            <person name="Chen Y."/>
            <person name="Clarke G."/>
            <person name="Clark S.Y."/>
            <person name="Clee C.M."/>
            <person name="Clegg S."/>
            <person name="Collier R.E."/>
            <person name="Corby N."/>
            <person name="Crosier M."/>
            <person name="Cummings A.T."/>
            <person name="Davies J."/>
            <person name="Dhami P."/>
            <person name="Dunn M."/>
            <person name="Dutta I."/>
            <person name="Dyer L.W."/>
            <person name="Earthrowl M.E."/>
            <person name="Faulkner L."/>
            <person name="Fleming C.J."/>
            <person name="Frankish A."/>
            <person name="Frankland J.A."/>
            <person name="French L."/>
            <person name="Fricker D.G."/>
            <person name="Garner P."/>
            <person name="Garnett J."/>
            <person name="Ghori J."/>
            <person name="Gilbert J.G.R."/>
            <person name="Glison C."/>
            <person name="Grafham D.V."/>
            <person name="Gribble S."/>
            <person name="Griffiths C."/>
            <person name="Griffiths-Jones S."/>
            <person name="Grocock R."/>
            <person name="Guy J."/>
            <person name="Hall R.E."/>
            <person name="Hammond S."/>
            <person name="Harley J.L."/>
            <person name="Harrison E.S.I."/>
            <person name="Hart E.A."/>
            <person name="Heath P.D."/>
            <person name="Henderson C.D."/>
            <person name="Hopkins B.L."/>
            <person name="Howard P.J."/>
            <person name="Howden P.J."/>
            <person name="Huckle E."/>
            <person name="Johnson C."/>
            <person name="Johnson D."/>
            <person name="Joy A.A."/>
            <person name="Kay M."/>
            <person name="Keenan S."/>
            <person name="Kershaw J.K."/>
            <person name="Kimberley A.M."/>
            <person name="King A."/>
            <person name="Knights A."/>
            <person name="Laird G.K."/>
            <person name="Langford C."/>
            <person name="Lawlor S."/>
            <person name="Leongamornlert D.A."/>
            <person name="Leversha M."/>
            <person name="Lloyd C."/>
            <person name="Lloyd D.M."/>
            <person name="Lovell J."/>
            <person name="Martin S."/>
            <person name="Mashreghi-Mohammadi M."/>
            <person name="Matthews L."/>
            <person name="McLaren S."/>
            <person name="McLay K.E."/>
            <person name="McMurray A."/>
            <person name="Milne S."/>
            <person name="Nickerson T."/>
            <person name="Nisbett J."/>
            <person name="Nordsiek G."/>
            <person name="Pearce A.V."/>
            <person name="Peck A.I."/>
            <person name="Porter K.M."/>
            <person name="Pandian R."/>
            <person name="Pelan S."/>
            <person name="Phillimore B."/>
            <person name="Povey S."/>
            <person name="Ramsey Y."/>
            <person name="Rand V."/>
            <person name="Scharfe M."/>
            <person name="Sehra H.K."/>
            <person name="Shownkeen R."/>
            <person name="Sims S.K."/>
            <person name="Skuce C.D."/>
            <person name="Smith M."/>
            <person name="Steward C.A."/>
            <person name="Swarbreck D."/>
            <person name="Sycamore N."/>
            <person name="Tester J."/>
            <person name="Thorpe A."/>
            <person name="Tracey A."/>
            <person name="Tromans A."/>
            <person name="Thomas D.W."/>
            <person name="Wall M."/>
            <person name="Wallis J.M."/>
            <person name="West A.P."/>
            <person name="Whitehead S.L."/>
            <person name="Willey D.L."/>
            <person name="Williams S.A."/>
            <person name="Wilming L."/>
            <person name="Wray P.W."/>
            <person name="Young L."/>
            <person name="Ashurst J.L."/>
            <person name="Coulson A."/>
            <person name="Blocker H."/>
            <person name="Durbin R.M."/>
            <person name="Sulston J.E."/>
            <person name="Hubbard T."/>
            <person name="Jackson M.J."/>
            <person name="Bentley D.R."/>
            <person name="Beck S."/>
            <person name="Rogers J."/>
            <person name="Dunham I."/>
        </authorList>
    </citation>
    <scope>NUCLEOTIDE SEQUENCE [LARGE SCALE GENOMIC DNA]</scope>
</reference>
<reference key="5">
    <citation type="submission" date="2005-09" db="EMBL/GenBank/DDBJ databases">
        <authorList>
            <person name="Mural R.J."/>
            <person name="Istrail S."/>
            <person name="Sutton G.G."/>
            <person name="Florea L."/>
            <person name="Halpern A.L."/>
            <person name="Mobarry C.M."/>
            <person name="Lippert R."/>
            <person name="Walenz B."/>
            <person name="Shatkay H."/>
            <person name="Dew I."/>
            <person name="Miller J.R."/>
            <person name="Flanigan M.J."/>
            <person name="Edwards N.J."/>
            <person name="Bolanos R."/>
            <person name="Fasulo D."/>
            <person name="Halldorsson B.V."/>
            <person name="Hannenhalli S."/>
            <person name="Turner R."/>
            <person name="Yooseph S."/>
            <person name="Lu F."/>
            <person name="Nusskern D.R."/>
            <person name="Shue B.C."/>
            <person name="Zheng X.H."/>
            <person name="Zhong F."/>
            <person name="Delcher A.L."/>
            <person name="Huson D.H."/>
            <person name="Kravitz S.A."/>
            <person name="Mouchard L."/>
            <person name="Reinert K."/>
            <person name="Remington K.A."/>
            <person name="Clark A.G."/>
            <person name="Waterman M.S."/>
            <person name="Eichler E.E."/>
            <person name="Adams M.D."/>
            <person name="Hunkapiller M.W."/>
            <person name="Myers E.W."/>
            <person name="Venter J.C."/>
        </authorList>
    </citation>
    <scope>NUCLEOTIDE SEQUENCE [LARGE SCALE GENOMIC DNA]</scope>
</reference>
<reference key="6">
    <citation type="journal article" date="2004" name="Genome Res.">
        <title>The status, quality, and expansion of the NIH full-length cDNA project: the Mammalian Gene Collection (MGC).</title>
        <authorList>
            <consortium name="The MGC Project Team"/>
        </authorList>
    </citation>
    <scope>NUCLEOTIDE SEQUENCE [LARGE SCALE MRNA] (ISOFORM 1)</scope>
    <source>
        <tissue>Lymph</tissue>
    </source>
</reference>
<reference key="7">
    <citation type="journal article" date="2011" name="BMC Syst. Biol.">
        <title>Initial characterization of the human central proteome.</title>
        <authorList>
            <person name="Burkard T.R."/>
            <person name="Planyavsky M."/>
            <person name="Kaupe I."/>
            <person name="Breitwieser F.P."/>
            <person name="Buerckstuemmer T."/>
            <person name="Bennett K.L."/>
            <person name="Superti-Furga G."/>
            <person name="Colinge J."/>
        </authorList>
    </citation>
    <scope>IDENTIFICATION BY MASS SPECTROMETRY [LARGE SCALE ANALYSIS]</scope>
</reference>
<reference key="8">
    <citation type="journal article" date="2014" name="J. Proteomics">
        <title>An enzyme assisted RP-RPLC approach for in-depth analysis of human liver phosphoproteome.</title>
        <authorList>
            <person name="Bian Y."/>
            <person name="Song C."/>
            <person name="Cheng K."/>
            <person name="Dong M."/>
            <person name="Wang F."/>
            <person name="Huang J."/>
            <person name="Sun D."/>
            <person name="Wang L."/>
            <person name="Ye M."/>
            <person name="Zou H."/>
        </authorList>
    </citation>
    <scope>IDENTIFICATION BY MASS SPECTROMETRY [LARGE SCALE ANALYSIS]</scope>
    <source>
        <tissue>Liver</tissue>
    </source>
</reference>
<reference key="9">
    <citation type="journal article" date="2015" name="Proteomics">
        <title>N-terminome analysis of the human mitochondrial proteome.</title>
        <authorList>
            <person name="Vaca Jacome A.S."/>
            <person name="Rabilloud T."/>
            <person name="Schaeffer-Reiss C."/>
            <person name="Rompais M."/>
            <person name="Ayoub D."/>
            <person name="Lane L."/>
            <person name="Bairoch A."/>
            <person name="Van Dorsselaer A."/>
            <person name="Carapito C."/>
        </authorList>
    </citation>
    <scope>IDENTIFICATION BY MASS SPECTROMETRY [LARGE SCALE ANALYSIS]</scope>
</reference>
<reference key="10">
    <citation type="journal article" date="2022" name="Int. J. Mol. Sci.">
        <title>Adenylate Kinase Isozyme 3 Regulates Mitochondrial Energy Metabolism and Knockout Alters HeLa Cell Metabolism.</title>
        <authorList>
            <person name="Fujisawa K."/>
            <person name="Wakazaki M."/>
            <person name="Matsuzaki A."/>
            <person name="Matsumoto T."/>
            <person name="Yamamoto N."/>
            <person name="Noma T."/>
            <person name="Takami T."/>
        </authorList>
    </citation>
    <scope>FUNCTION</scope>
</reference>
<reference evidence="16" key="11">
    <citation type="submission" date="2005-05" db="PDB data bank">
        <title>Structure of human adenylate kinase 3-like 1.</title>
        <authorList>
            <consortium name="Structural genomics consortium (SGC)"/>
        </authorList>
    </citation>
    <scope>X-RAY CRYSTALLOGRAPHY (1.48 ANGSTROMS)</scope>
</reference>
<reference evidence="17 18 19" key="12">
    <citation type="journal article" date="2020" name="Biochemistry">
        <title>Structural Basis for GTP versus ATP Selectivity in the NMP Kinase AK3.</title>
        <authorList>
            <person name="Rogne P."/>
            <person name="Dulko-Smith B."/>
            <person name="Goodman J."/>
            <person name="Rosselin M."/>
            <person name="Grundstrom C."/>
            <person name="Hedberg C."/>
            <person name="Nam K."/>
            <person name="Sauer-Eriksson A.E."/>
            <person name="Wolf-Watz M."/>
        </authorList>
    </citation>
    <scope>X-RAY CRYSTALLOGRAPHY (1.48 ANGSTROMS) IN COMPLEX WITH GTP AND AMP ANALOGS AND ATP</scope>
    <scope>FUNCTION</scope>
    <scope>CATALYTIC ACTIVITY</scope>
    <scope>BIOPHYSICOCHEMICAL PROPERTIES</scope>
    <scope>ACTIVITY REGULATION</scope>
</reference>